<feature type="chain" id="PRO_1000187253" description="Heme A synthase">
    <location>
        <begin position="1"/>
        <end position="359"/>
    </location>
</feature>
<feature type="transmembrane region" description="Helical" evidence="1">
    <location>
        <begin position="8"/>
        <end position="28"/>
    </location>
</feature>
<feature type="transmembrane region" description="Helical" evidence="1">
    <location>
        <begin position="94"/>
        <end position="114"/>
    </location>
</feature>
<feature type="transmembrane region" description="Helical" evidence="1">
    <location>
        <begin position="124"/>
        <end position="144"/>
    </location>
</feature>
<feature type="transmembrane region" description="Helical" evidence="1">
    <location>
        <begin position="159"/>
        <end position="179"/>
    </location>
</feature>
<feature type="transmembrane region" description="Helical" evidence="1">
    <location>
        <begin position="215"/>
        <end position="235"/>
    </location>
</feature>
<feature type="transmembrane region" description="Helical" evidence="1">
    <location>
        <begin position="276"/>
        <end position="296"/>
    </location>
</feature>
<feature type="transmembrane region" description="Helical" evidence="1">
    <location>
        <begin position="303"/>
        <end position="323"/>
    </location>
</feature>
<feature type="transmembrane region" description="Helical" evidence="1">
    <location>
        <begin position="328"/>
        <end position="348"/>
    </location>
</feature>
<feature type="binding site" description="axial binding residue" evidence="1">
    <location>
        <position position="274"/>
    </location>
    <ligand>
        <name>heme</name>
        <dbReference type="ChEBI" id="CHEBI:30413"/>
    </ligand>
    <ligandPart>
        <name>Fe</name>
        <dbReference type="ChEBI" id="CHEBI:18248"/>
    </ligandPart>
</feature>
<feature type="binding site" description="axial binding residue" evidence="1">
    <location>
        <position position="334"/>
    </location>
    <ligand>
        <name>heme</name>
        <dbReference type="ChEBI" id="CHEBI:30413"/>
    </ligand>
    <ligandPart>
        <name>Fe</name>
        <dbReference type="ChEBI" id="CHEBI:18248"/>
    </ligandPart>
</feature>
<accession>B3CRU7</accession>
<name>CTAA_ORITI</name>
<reference key="1">
    <citation type="journal article" date="2008" name="DNA Res.">
        <title>The whole-genome sequencing of the obligate intracellular bacterium Orientia tsutsugamushi revealed massive gene amplification during reductive genome evolution.</title>
        <authorList>
            <person name="Nakayama K."/>
            <person name="Yamashita A."/>
            <person name="Kurokawa K."/>
            <person name="Morimoto T."/>
            <person name="Ogawa M."/>
            <person name="Fukuhara M."/>
            <person name="Urakami H."/>
            <person name="Ohnishi M."/>
            <person name="Uchiyama I."/>
            <person name="Ogura Y."/>
            <person name="Ooka T."/>
            <person name="Oshima K."/>
            <person name="Tamura A."/>
            <person name="Hattori M."/>
            <person name="Hayashi T."/>
        </authorList>
    </citation>
    <scope>NUCLEOTIDE SEQUENCE [LARGE SCALE GENOMIC DNA]</scope>
    <source>
        <strain>Ikeda</strain>
    </source>
</reference>
<evidence type="ECO:0000255" key="1">
    <source>
        <dbReference type="HAMAP-Rule" id="MF_01665"/>
    </source>
</evidence>
<comment type="function">
    <text evidence="1">Catalyzes the conversion of heme O to heme A by two successive hydroxylations of the methyl group at C8. The first hydroxylation forms heme I, the second hydroxylation results in an unstable dihydroxymethyl group, which spontaneously dehydrates, resulting in the formyl group of heme A.</text>
</comment>
<comment type="catalytic activity">
    <reaction evidence="1">
        <text>Fe(II)-heme o + 2 A + H2O = Fe(II)-heme a + 2 AH2</text>
        <dbReference type="Rhea" id="RHEA:63388"/>
        <dbReference type="ChEBI" id="CHEBI:13193"/>
        <dbReference type="ChEBI" id="CHEBI:15377"/>
        <dbReference type="ChEBI" id="CHEBI:17499"/>
        <dbReference type="ChEBI" id="CHEBI:60530"/>
        <dbReference type="ChEBI" id="CHEBI:61715"/>
        <dbReference type="EC" id="1.17.99.9"/>
    </reaction>
    <physiologicalReaction direction="left-to-right" evidence="1">
        <dbReference type="Rhea" id="RHEA:63389"/>
    </physiologicalReaction>
</comment>
<comment type="cofactor">
    <cofactor evidence="1">
        <name>heme b</name>
        <dbReference type="ChEBI" id="CHEBI:60344"/>
    </cofactor>
</comment>
<comment type="pathway">
    <text evidence="1">Porphyrin-containing compound metabolism; heme A biosynthesis; heme A from heme O: step 1/1.</text>
</comment>
<comment type="subunit">
    <text evidence="1">Interacts with CtaB.</text>
</comment>
<comment type="subcellular location">
    <subcellularLocation>
        <location evidence="1">Cell membrane</location>
        <topology evidence="1">Multi-pass membrane protein</topology>
    </subcellularLocation>
</comment>
<comment type="similarity">
    <text evidence="1">Belongs to the COX15/CtaA family. Type 2 subfamily.</text>
</comment>
<proteinExistence type="inferred from homology"/>
<gene>
    <name evidence="1" type="primary">ctaA</name>
    <name type="ordered locus">OTT_0693</name>
</gene>
<sequence>MDKPHIQIMSIWLIVSTLLLLLMIVVGGITRLTNAGLSIVEWNPVSGIIPPISSEDWNNEFNKYTASPEFNLINNQITISEFKYIFFIEYIHRLLGRITGIIIIIPFLIFYYLKSLTKLQCYRLLLITCLVIIQGFMGWYMVKSGLKDTPYINHCRLAGHLLLAVVIYHQLIAELLIIIQPFKCYMLATSKANNSNSTSINVINLKTKLIVLNKIIIFLLYTQIMFGALVAGLDAGLIYNEFPNMGDSLIPIEILNQSIDFTMFDNQVLMQFIHRWFGILISCLIICYAIWLIILNKQALRGMGMVAACLVLVQVTTGIITLVYHVPILAALTHQVGAILILTTFLFIQNIVTNFELLH</sequence>
<dbReference type="EC" id="1.17.99.9" evidence="1"/>
<dbReference type="EMBL" id="AP008981">
    <property type="protein sequence ID" value="BAG40151.1"/>
    <property type="molecule type" value="Genomic_DNA"/>
</dbReference>
<dbReference type="RefSeq" id="WP_012461324.1">
    <property type="nucleotide sequence ID" value="NC_010793.1"/>
</dbReference>
<dbReference type="SMR" id="B3CRU7"/>
<dbReference type="KEGG" id="ott:OTT_0693"/>
<dbReference type="HOGENOM" id="CLU_017627_0_0_5"/>
<dbReference type="OrthoDB" id="9793156at2"/>
<dbReference type="UniPathway" id="UPA00269">
    <property type="reaction ID" value="UER00713"/>
</dbReference>
<dbReference type="Proteomes" id="UP000001033">
    <property type="component" value="Chromosome"/>
</dbReference>
<dbReference type="GO" id="GO:0005886">
    <property type="term" value="C:plasma membrane"/>
    <property type="evidence" value="ECO:0007669"/>
    <property type="project" value="UniProtKB-SubCell"/>
</dbReference>
<dbReference type="GO" id="GO:0046872">
    <property type="term" value="F:metal ion binding"/>
    <property type="evidence" value="ECO:0007669"/>
    <property type="project" value="UniProtKB-KW"/>
</dbReference>
<dbReference type="GO" id="GO:0016653">
    <property type="term" value="F:oxidoreductase activity, acting on NAD(P)H, heme protein as acceptor"/>
    <property type="evidence" value="ECO:0007669"/>
    <property type="project" value="InterPro"/>
</dbReference>
<dbReference type="GO" id="GO:0006784">
    <property type="term" value="P:heme A biosynthetic process"/>
    <property type="evidence" value="ECO:0007669"/>
    <property type="project" value="UniProtKB-UniRule"/>
</dbReference>
<dbReference type="HAMAP" id="MF_01665">
    <property type="entry name" value="HemeA_synth_type2"/>
    <property type="match status" value="1"/>
</dbReference>
<dbReference type="InterPro" id="IPR003780">
    <property type="entry name" value="COX15/CtaA_fam"/>
</dbReference>
<dbReference type="InterPro" id="IPR023754">
    <property type="entry name" value="HemeA_Synthase_type2"/>
</dbReference>
<dbReference type="PANTHER" id="PTHR23289">
    <property type="entry name" value="CYTOCHROME C OXIDASE ASSEMBLY PROTEIN COX15"/>
    <property type="match status" value="1"/>
</dbReference>
<dbReference type="PANTHER" id="PTHR23289:SF2">
    <property type="entry name" value="CYTOCHROME C OXIDASE ASSEMBLY PROTEIN COX15 HOMOLOG"/>
    <property type="match status" value="1"/>
</dbReference>
<dbReference type="Pfam" id="PF02628">
    <property type="entry name" value="COX15-CtaA"/>
    <property type="match status" value="1"/>
</dbReference>
<keyword id="KW-1003">Cell membrane</keyword>
<keyword id="KW-0350">Heme biosynthesis</keyword>
<keyword id="KW-0408">Iron</keyword>
<keyword id="KW-0472">Membrane</keyword>
<keyword id="KW-0479">Metal-binding</keyword>
<keyword id="KW-0560">Oxidoreductase</keyword>
<keyword id="KW-0812">Transmembrane</keyword>
<keyword id="KW-1133">Transmembrane helix</keyword>
<protein>
    <recommendedName>
        <fullName evidence="1">Heme A synthase</fullName>
        <shortName evidence="1">HAS</shortName>
        <ecNumber evidence="1">1.17.99.9</ecNumber>
    </recommendedName>
    <alternativeName>
        <fullName evidence="1">Cytochrome aa3-controlling protein</fullName>
    </alternativeName>
</protein>
<organism>
    <name type="scientific">Orientia tsutsugamushi (strain Ikeda)</name>
    <name type="common">Rickettsia tsutsugamushi</name>
    <dbReference type="NCBI Taxonomy" id="334380"/>
    <lineage>
        <taxon>Bacteria</taxon>
        <taxon>Pseudomonadati</taxon>
        <taxon>Pseudomonadota</taxon>
        <taxon>Alphaproteobacteria</taxon>
        <taxon>Rickettsiales</taxon>
        <taxon>Rickettsiaceae</taxon>
        <taxon>Rickettsieae</taxon>
        <taxon>Orientia</taxon>
    </lineage>
</organism>